<proteinExistence type="inferred from homology"/>
<protein>
    <recommendedName>
        <fullName evidence="1">Small ribosomal subunit protein eS4</fullName>
    </recommendedName>
    <alternativeName>
        <fullName evidence="2">30S ribosomal protein S4e</fullName>
    </alternativeName>
</protein>
<keyword id="KW-1185">Reference proteome</keyword>
<keyword id="KW-0687">Ribonucleoprotein</keyword>
<keyword id="KW-0689">Ribosomal protein</keyword>
<keyword id="KW-0694">RNA-binding</keyword>
<keyword id="KW-0699">rRNA-binding</keyword>
<comment type="similarity">
    <text evidence="1">Belongs to the eukaryotic ribosomal protein eS4 family.</text>
</comment>
<gene>
    <name evidence="1" type="primary">rps4e</name>
    <name type="ordered locus">NEQ478</name>
</gene>
<sequence>MPTYIKRHLRSLAVPRTWPVPRKSRGYWIVKPSPGPHSKEFAMPIAVWLRDYLGLAENMREVRYLLNNGKVLVDGRPIKDYKFPVGLFDVLAIPEINEYYRVLLDERGKLYLKKIDKEEANIKYGKIIRKVSVRGGKIQYTLTDGRTFLGDNSYKTHYGVVYEIPNFKIREVIPLEKDRKAYIIRGKHTGRIGVIKEVIKTDMPWPNIVRLEVAGEVGETWLDNIIPVPENFEA</sequence>
<name>RS4E_NANEQ</name>
<feature type="chain" id="PRO_0000130855" description="Small ribosomal subunit protein eS4">
    <location>
        <begin position="1"/>
        <end position="234"/>
    </location>
</feature>
<feature type="domain" description="S4 RNA-binding" evidence="1">
    <location>
        <begin position="43"/>
        <end position="106"/>
    </location>
</feature>
<evidence type="ECO:0000255" key="1">
    <source>
        <dbReference type="HAMAP-Rule" id="MF_00485"/>
    </source>
</evidence>
<evidence type="ECO:0000305" key="2"/>
<accession>P62429</accession>
<organism>
    <name type="scientific">Nanoarchaeum equitans (strain Kin4-M)</name>
    <dbReference type="NCBI Taxonomy" id="228908"/>
    <lineage>
        <taxon>Archaea</taxon>
        <taxon>Nanobdellota</taxon>
        <taxon>Candidatus Nanoarchaeia</taxon>
        <taxon>Nanoarchaeales</taxon>
        <taxon>Nanoarchaeaceae</taxon>
        <taxon>Nanoarchaeum</taxon>
    </lineage>
</organism>
<reference key="1">
    <citation type="journal article" date="2003" name="Proc. Natl. Acad. Sci. U.S.A.">
        <title>The genome of Nanoarchaeum equitans: insights into early archaeal evolution and derived parasitism.</title>
        <authorList>
            <person name="Waters E."/>
            <person name="Hohn M.J."/>
            <person name="Ahel I."/>
            <person name="Graham D.E."/>
            <person name="Adams M.D."/>
            <person name="Barnstead M."/>
            <person name="Beeson K.Y."/>
            <person name="Bibbs L."/>
            <person name="Bolanos R."/>
            <person name="Keller M."/>
            <person name="Kretz K."/>
            <person name="Lin X."/>
            <person name="Mathur E."/>
            <person name="Ni J."/>
            <person name="Podar M."/>
            <person name="Richardson T."/>
            <person name="Sutton G.G."/>
            <person name="Simon M."/>
            <person name="Soell D."/>
            <person name="Stetter K.O."/>
            <person name="Short J.M."/>
            <person name="Noorderwier M."/>
        </authorList>
    </citation>
    <scope>NUCLEOTIDE SEQUENCE [LARGE SCALE GENOMIC DNA]</scope>
    <source>
        <strain>Kin4-M</strain>
    </source>
</reference>
<dbReference type="EMBL" id="AE017199">
    <property type="protein sequence ID" value="AAR39321.1"/>
    <property type="molecule type" value="Genomic_DNA"/>
</dbReference>
<dbReference type="SMR" id="P62429"/>
<dbReference type="STRING" id="228908.NEQ478"/>
<dbReference type="EnsemblBacteria" id="AAR39321">
    <property type="protein sequence ID" value="AAR39321"/>
    <property type="gene ID" value="NEQ478"/>
</dbReference>
<dbReference type="KEGG" id="neq:NEQ478"/>
<dbReference type="PATRIC" id="fig|228908.8.peg.493"/>
<dbReference type="HOGENOM" id="CLU_060400_0_0_2"/>
<dbReference type="Proteomes" id="UP000000578">
    <property type="component" value="Chromosome"/>
</dbReference>
<dbReference type="GO" id="GO:0022627">
    <property type="term" value="C:cytosolic small ribosomal subunit"/>
    <property type="evidence" value="ECO:0007669"/>
    <property type="project" value="TreeGrafter"/>
</dbReference>
<dbReference type="GO" id="GO:0019843">
    <property type="term" value="F:rRNA binding"/>
    <property type="evidence" value="ECO:0007669"/>
    <property type="project" value="UniProtKB-KW"/>
</dbReference>
<dbReference type="GO" id="GO:0003735">
    <property type="term" value="F:structural constituent of ribosome"/>
    <property type="evidence" value="ECO:0007669"/>
    <property type="project" value="InterPro"/>
</dbReference>
<dbReference type="GO" id="GO:0006412">
    <property type="term" value="P:translation"/>
    <property type="evidence" value="ECO:0007669"/>
    <property type="project" value="UniProtKB-UniRule"/>
</dbReference>
<dbReference type="CDD" id="cd06087">
    <property type="entry name" value="KOW_RPS4"/>
    <property type="match status" value="1"/>
</dbReference>
<dbReference type="CDD" id="cd00165">
    <property type="entry name" value="S4"/>
    <property type="match status" value="1"/>
</dbReference>
<dbReference type="Gene3D" id="2.30.30.30">
    <property type="match status" value="1"/>
</dbReference>
<dbReference type="Gene3D" id="2.40.50.740">
    <property type="match status" value="1"/>
</dbReference>
<dbReference type="Gene3D" id="3.10.290.10">
    <property type="entry name" value="RNA-binding S4 domain"/>
    <property type="match status" value="1"/>
</dbReference>
<dbReference type="HAMAP" id="MF_00485">
    <property type="entry name" value="Ribosomal_eS4"/>
    <property type="match status" value="1"/>
</dbReference>
<dbReference type="InterPro" id="IPR005824">
    <property type="entry name" value="KOW"/>
</dbReference>
<dbReference type="InterPro" id="IPR014722">
    <property type="entry name" value="Rib_uL2_dom2"/>
</dbReference>
<dbReference type="InterPro" id="IPR000876">
    <property type="entry name" value="Ribosomal_eS4"/>
</dbReference>
<dbReference type="InterPro" id="IPR013845">
    <property type="entry name" value="Ribosomal_eS4_central_region"/>
</dbReference>
<dbReference type="InterPro" id="IPR038237">
    <property type="entry name" value="Ribosomal_eS4_central_sf"/>
</dbReference>
<dbReference type="InterPro" id="IPR041982">
    <property type="entry name" value="Ribosomal_eS4_KOW"/>
</dbReference>
<dbReference type="InterPro" id="IPR013843">
    <property type="entry name" value="Ribosomal_eS4_N"/>
</dbReference>
<dbReference type="InterPro" id="IPR002942">
    <property type="entry name" value="S4_RNA-bd"/>
</dbReference>
<dbReference type="InterPro" id="IPR036986">
    <property type="entry name" value="S4_RNA-bd_sf"/>
</dbReference>
<dbReference type="NCBIfam" id="NF003312">
    <property type="entry name" value="PRK04313.1"/>
    <property type="match status" value="1"/>
</dbReference>
<dbReference type="PANTHER" id="PTHR11581">
    <property type="entry name" value="30S/40S RIBOSOMAL PROTEIN S4"/>
    <property type="match status" value="1"/>
</dbReference>
<dbReference type="PANTHER" id="PTHR11581:SF0">
    <property type="entry name" value="SMALL RIBOSOMAL SUBUNIT PROTEIN ES4"/>
    <property type="match status" value="1"/>
</dbReference>
<dbReference type="Pfam" id="PF00467">
    <property type="entry name" value="KOW"/>
    <property type="match status" value="1"/>
</dbReference>
<dbReference type="Pfam" id="PF00900">
    <property type="entry name" value="Ribosomal_S4e"/>
    <property type="match status" value="1"/>
</dbReference>
<dbReference type="Pfam" id="PF08071">
    <property type="entry name" value="RS4NT"/>
    <property type="match status" value="1"/>
</dbReference>
<dbReference type="Pfam" id="PF01479">
    <property type="entry name" value="S4"/>
    <property type="match status" value="1"/>
</dbReference>
<dbReference type="PIRSF" id="PIRSF002116">
    <property type="entry name" value="Ribosomal_S4"/>
    <property type="match status" value="1"/>
</dbReference>
<dbReference type="SMART" id="SM00739">
    <property type="entry name" value="KOW"/>
    <property type="match status" value="1"/>
</dbReference>
<dbReference type="SMART" id="SM00363">
    <property type="entry name" value="S4"/>
    <property type="match status" value="1"/>
</dbReference>
<dbReference type="SUPFAM" id="SSF55174">
    <property type="entry name" value="Alpha-L RNA-binding motif"/>
    <property type="match status" value="1"/>
</dbReference>
<dbReference type="PROSITE" id="PS50889">
    <property type="entry name" value="S4"/>
    <property type="match status" value="1"/>
</dbReference>